<keyword id="KW-1185">Reference proteome</keyword>
<keyword id="KW-0687">Ribonucleoprotein</keyword>
<keyword id="KW-0689">Ribosomal protein</keyword>
<keyword id="KW-0694">RNA-binding</keyword>
<keyword id="KW-0699">rRNA-binding</keyword>
<protein>
    <recommendedName>
        <fullName evidence="1">Small ribosomal subunit protein bS6</fullName>
    </recommendedName>
    <alternativeName>
        <fullName evidence="3">30S ribosomal protein S6</fullName>
    </alternativeName>
</protein>
<sequence length="128" mass="14509">MRHYEVVFIVHPDQSEQVPAMIERYKAIVTARNGQIHRLEDWGRRQMAYPIQKVHKAHYVLMNIECDGEALGELEHAFKFNDAVLRHLVVKTKAAVTTPSPMMKEEKSRSLTAAPATDEAKPAEAESA</sequence>
<name>RS6_AROAE</name>
<feature type="chain" id="PRO_0000229522" description="Small ribosomal subunit protein bS6">
    <location>
        <begin position="1"/>
        <end position="128"/>
    </location>
</feature>
<feature type="region of interest" description="Disordered" evidence="2">
    <location>
        <begin position="97"/>
        <end position="128"/>
    </location>
</feature>
<feature type="compositionally biased region" description="Basic and acidic residues" evidence="2">
    <location>
        <begin position="118"/>
        <end position="128"/>
    </location>
</feature>
<reference key="1">
    <citation type="journal article" date="2005" name="Arch. Microbiol.">
        <title>The genome sequence of an anaerobic aromatic-degrading denitrifying bacterium, strain EbN1.</title>
        <authorList>
            <person name="Rabus R."/>
            <person name="Kube M."/>
            <person name="Heider J."/>
            <person name="Beck A."/>
            <person name="Heitmann K."/>
            <person name="Widdel F."/>
            <person name="Reinhardt R."/>
        </authorList>
    </citation>
    <scope>NUCLEOTIDE SEQUENCE [LARGE SCALE GENOMIC DNA]</scope>
    <source>
        <strain>DSM 19018 / LMG 30748 / EbN1</strain>
    </source>
</reference>
<evidence type="ECO:0000255" key="1">
    <source>
        <dbReference type="HAMAP-Rule" id="MF_00360"/>
    </source>
</evidence>
<evidence type="ECO:0000256" key="2">
    <source>
        <dbReference type="SAM" id="MobiDB-lite"/>
    </source>
</evidence>
<evidence type="ECO:0000305" key="3"/>
<accession>Q5P2M5</accession>
<comment type="function">
    <text evidence="1">Binds together with bS18 to 16S ribosomal RNA.</text>
</comment>
<comment type="similarity">
    <text evidence="1">Belongs to the bacterial ribosomal protein bS6 family.</text>
</comment>
<gene>
    <name evidence="1" type="primary">rpsF</name>
    <name type="ordered locus">AZOSEA23140</name>
    <name type="ORF">ebA4075</name>
</gene>
<organism>
    <name type="scientific">Aromatoleum aromaticum (strain DSM 19018 / LMG 30748 / EbN1)</name>
    <name type="common">Azoarcus sp. (strain EbN1)</name>
    <dbReference type="NCBI Taxonomy" id="76114"/>
    <lineage>
        <taxon>Bacteria</taxon>
        <taxon>Pseudomonadati</taxon>
        <taxon>Pseudomonadota</taxon>
        <taxon>Betaproteobacteria</taxon>
        <taxon>Rhodocyclales</taxon>
        <taxon>Rhodocyclaceae</taxon>
        <taxon>Aromatoleum</taxon>
    </lineage>
</organism>
<proteinExistence type="inferred from homology"/>
<dbReference type="EMBL" id="CR555306">
    <property type="protein sequence ID" value="CAI08439.1"/>
    <property type="molecule type" value="Genomic_DNA"/>
</dbReference>
<dbReference type="RefSeq" id="WP_011238126.1">
    <property type="nucleotide sequence ID" value="NC_006513.1"/>
</dbReference>
<dbReference type="SMR" id="Q5P2M5"/>
<dbReference type="STRING" id="76114.ebA4075"/>
<dbReference type="KEGG" id="eba:ebA4075"/>
<dbReference type="eggNOG" id="COG0360">
    <property type="taxonomic scope" value="Bacteria"/>
</dbReference>
<dbReference type="HOGENOM" id="CLU_113441_6_1_4"/>
<dbReference type="OrthoDB" id="9812702at2"/>
<dbReference type="Proteomes" id="UP000006552">
    <property type="component" value="Chromosome"/>
</dbReference>
<dbReference type="GO" id="GO:0022627">
    <property type="term" value="C:cytosolic small ribosomal subunit"/>
    <property type="evidence" value="ECO:0007669"/>
    <property type="project" value="TreeGrafter"/>
</dbReference>
<dbReference type="GO" id="GO:0070181">
    <property type="term" value="F:small ribosomal subunit rRNA binding"/>
    <property type="evidence" value="ECO:0007669"/>
    <property type="project" value="TreeGrafter"/>
</dbReference>
<dbReference type="GO" id="GO:0003735">
    <property type="term" value="F:structural constituent of ribosome"/>
    <property type="evidence" value="ECO:0007669"/>
    <property type="project" value="InterPro"/>
</dbReference>
<dbReference type="GO" id="GO:0006412">
    <property type="term" value="P:translation"/>
    <property type="evidence" value="ECO:0007669"/>
    <property type="project" value="UniProtKB-UniRule"/>
</dbReference>
<dbReference type="CDD" id="cd00473">
    <property type="entry name" value="bS6"/>
    <property type="match status" value="1"/>
</dbReference>
<dbReference type="FunFam" id="3.30.70.60:FF:000003">
    <property type="entry name" value="30S ribosomal protein S6"/>
    <property type="match status" value="1"/>
</dbReference>
<dbReference type="Gene3D" id="3.30.70.60">
    <property type="match status" value="1"/>
</dbReference>
<dbReference type="HAMAP" id="MF_00360">
    <property type="entry name" value="Ribosomal_bS6"/>
    <property type="match status" value="1"/>
</dbReference>
<dbReference type="InterPro" id="IPR000529">
    <property type="entry name" value="Ribosomal_bS6"/>
</dbReference>
<dbReference type="InterPro" id="IPR035980">
    <property type="entry name" value="Ribosomal_bS6_sf"/>
</dbReference>
<dbReference type="InterPro" id="IPR020814">
    <property type="entry name" value="Ribosomal_S6_plastid/chlpt"/>
</dbReference>
<dbReference type="InterPro" id="IPR014717">
    <property type="entry name" value="Transl_elong_EF1B/ribsomal_bS6"/>
</dbReference>
<dbReference type="NCBIfam" id="TIGR00166">
    <property type="entry name" value="S6"/>
    <property type="match status" value="1"/>
</dbReference>
<dbReference type="PANTHER" id="PTHR21011">
    <property type="entry name" value="MITOCHONDRIAL 28S RIBOSOMAL PROTEIN S6"/>
    <property type="match status" value="1"/>
</dbReference>
<dbReference type="PANTHER" id="PTHR21011:SF1">
    <property type="entry name" value="SMALL RIBOSOMAL SUBUNIT PROTEIN BS6M"/>
    <property type="match status" value="1"/>
</dbReference>
<dbReference type="Pfam" id="PF01250">
    <property type="entry name" value="Ribosomal_S6"/>
    <property type="match status" value="1"/>
</dbReference>
<dbReference type="SUPFAM" id="SSF54995">
    <property type="entry name" value="Ribosomal protein S6"/>
    <property type="match status" value="1"/>
</dbReference>